<evidence type="ECO:0000250" key="1"/>
<evidence type="ECO:0000255" key="2"/>
<evidence type="ECO:0000305" key="3"/>
<protein>
    <recommendedName>
        <fullName>Cystatin</fullName>
    </recommendedName>
</protein>
<organism>
    <name type="scientific">Oncorhynchus mykiss</name>
    <name type="common">Rainbow trout</name>
    <name type="synonym">Salmo gairdneri</name>
    <dbReference type="NCBI Taxonomy" id="8022"/>
    <lineage>
        <taxon>Eukaryota</taxon>
        <taxon>Metazoa</taxon>
        <taxon>Chordata</taxon>
        <taxon>Craniata</taxon>
        <taxon>Vertebrata</taxon>
        <taxon>Euteleostomi</taxon>
        <taxon>Actinopterygii</taxon>
        <taxon>Neopterygii</taxon>
        <taxon>Teleostei</taxon>
        <taxon>Protacanthopterygii</taxon>
        <taxon>Salmoniformes</taxon>
        <taxon>Salmonidae</taxon>
        <taxon>Salmoninae</taxon>
        <taxon>Oncorhynchus</taxon>
    </lineage>
</organism>
<accession>Q91195</accession>
<dbReference type="EMBL" id="U33555">
    <property type="protein sequence ID" value="AAA82049.1"/>
    <property type="molecule type" value="mRNA"/>
</dbReference>
<dbReference type="RefSeq" id="NP_001118176.1">
    <property type="nucleotide sequence ID" value="NM_001124704.2"/>
</dbReference>
<dbReference type="SMR" id="Q91195"/>
<dbReference type="MEROPS" id="I25.041"/>
<dbReference type="GeneID" id="100136752"/>
<dbReference type="KEGG" id="omy:100136752"/>
<dbReference type="OrthoDB" id="1908104at2759"/>
<dbReference type="SABIO-RK" id="Q91195"/>
<dbReference type="Proteomes" id="UP000694395">
    <property type="component" value="Unplaced"/>
</dbReference>
<dbReference type="GO" id="GO:0005737">
    <property type="term" value="C:cytoplasm"/>
    <property type="evidence" value="ECO:0007669"/>
    <property type="project" value="TreeGrafter"/>
</dbReference>
<dbReference type="GO" id="GO:0005615">
    <property type="term" value="C:extracellular space"/>
    <property type="evidence" value="ECO:0007669"/>
    <property type="project" value="TreeGrafter"/>
</dbReference>
<dbReference type="GO" id="GO:0031982">
    <property type="term" value="C:vesicle"/>
    <property type="evidence" value="ECO:0007669"/>
    <property type="project" value="TreeGrafter"/>
</dbReference>
<dbReference type="GO" id="GO:0004869">
    <property type="term" value="F:cysteine-type endopeptidase inhibitor activity"/>
    <property type="evidence" value="ECO:0007669"/>
    <property type="project" value="UniProtKB-KW"/>
</dbReference>
<dbReference type="GO" id="GO:0030414">
    <property type="term" value="F:peptidase inhibitor activity"/>
    <property type="evidence" value="ECO:0000314"/>
    <property type="project" value="AgBase"/>
</dbReference>
<dbReference type="CDD" id="cd00042">
    <property type="entry name" value="CY"/>
    <property type="match status" value="1"/>
</dbReference>
<dbReference type="FunFam" id="3.10.450.10:FF:000004">
    <property type="entry name" value="Cystatin C"/>
    <property type="match status" value="1"/>
</dbReference>
<dbReference type="Gene3D" id="3.10.450.10">
    <property type="match status" value="1"/>
</dbReference>
<dbReference type="InterPro" id="IPR000010">
    <property type="entry name" value="Cystatin_dom"/>
</dbReference>
<dbReference type="InterPro" id="IPR046350">
    <property type="entry name" value="Cystatin_sf"/>
</dbReference>
<dbReference type="InterPro" id="IPR018073">
    <property type="entry name" value="Prot_inh_cystat_CS"/>
</dbReference>
<dbReference type="PANTHER" id="PTHR46186">
    <property type="entry name" value="CYSTATIN"/>
    <property type="match status" value="1"/>
</dbReference>
<dbReference type="PANTHER" id="PTHR46186:SF12">
    <property type="entry name" value="CYSTATIN C (AMYLOID ANGIOPATHY AND CEREBRAL HEMORRHAGE)-RELATED"/>
    <property type="match status" value="1"/>
</dbReference>
<dbReference type="Pfam" id="PF00031">
    <property type="entry name" value="Cystatin"/>
    <property type="match status" value="1"/>
</dbReference>
<dbReference type="SMART" id="SM00043">
    <property type="entry name" value="CY"/>
    <property type="match status" value="1"/>
</dbReference>
<dbReference type="SUPFAM" id="SSF54403">
    <property type="entry name" value="Cystatin/monellin"/>
    <property type="match status" value="1"/>
</dbReference>
<dbReference type="PROSITE" id="PS00287">
    <property type="entry name" value="CYSTATIN"/>
    <property type="match status" value="1"/>
</dbReference>
<reference key="1">
    <citation type="submission" date="1995-08" db="EMBL/GenBank/DDBJ databases">
        <authorList>
            <person name="Li F."/>
            <person name="An H."/>
            <person name="Seymour T.A."/>
            <person name="Morrissey M.T."/>
            <person name="Barnes D.W."/>
        </authorList>
    </citation>
    <scope>NUCLEOTIDE SEQUENCE [MRNA]</scope>
    <source>
        <tissue>Liver</tissue>
    </source>
</reference>
<name>CYT_ONCMY</name>
<sequence>MEWKIVVPLFAVAFTVANAGLIGGPMDANMNDQGTRDALQFAVVEHNKKTNDMFVRQVAKVVNAQKQVVSGMKYIFTVQMGRTPCRKGGVEKVCSVHKDPQMAVPYKCTFEVWSRPWMSDIQMVKNQCES</sequence>
<proteinExistence type="evidence at transcript level"/>
<keyword id="KW-1015">Disulfide bond</keyword>
<keyword id="KW-0646">Protease inhibitor</keyword>
<keyword id="KW-0964">Secreted</keyword>
<keyword id="KW-0732">Signal</keyword>
<keyword id="KW-0789">Thiol protease inhibitor</keyword>
<feature type="signal peptide" evidence="2">
    <location>
        <begin position="1"/>
        <end position="19"/>
    </location>
</feature>
<feature type="chain" id="PRO_0000006666" description="Cystatin">
    <location>
        <begin position="20"/>
        <end position="130"/>
    </location>
</feature>
<feature type="short sequence motif" description="Secondary area of contact" evidence="1">
    <location>
        <begin position="67"/>
        <end position="71"/>
    </location>
</feature>
<feature type="site" description="Reactive site" evidence="1">
    <location>
        <position position="23"/>
    </location>
</feature>
<feature type="disulfide bond" evidence="1">
    <location>
        <begin position="85"/>
        <end position="94"/>
    </location>
</feature>
<feature type="disulfide bond" evidence="1">
    <location>
        <begin position="108"/>
        <end position="128"/>
    </location>
</feature>
<comment type="function">
    <text>Cysteine proteinase inhibitor.</text>
</comment>
<comment type="subcellular location">
    <subcellularLocation>
        <location evidence="1">Secreted</location>
    </subcellularLocation>
</comment>
<comment type="similarity">
    <text evidence="3">Belongs to the cystatin family.</text>
</comment>